<comment type="similarity">
    <text evidence="1">Belongs to the DNA glycosylase MPG family.</text>
</comment>
<dbReference type="EC" id="3.2.2.-" evidence="1"/>
<dbReference type="EMBL" id="CP000431">
    <property type="protein sequence ID" value="ABG92771.1"/>
    <property type="molecule type" value="Genomic_DNA"/>
</dbReference>
<dbReference type="RefSeq" id="WP_011594137.1">
    <property type="nucleotide sequence ID" value="NC_008268.1"/>
</dbReference>
<dbReference type="SMR" id="Q0SI65"/>
<dbReference type="KEGG" id="rha:RHA1_ro00943"/>
<dbReference type="PATRIC" id="fig|101510.16.peg.962"/>
<dbReference type="eggNOG" id="COG2094">
    <property type="taxonomic scope" value="Bacteria"/>
</dbReference>
<dbReference type="HOGENOM" id="CLU_060471_3_1_11"/>
<dbReference type="OrthoDB" id="9794313at2"/>
<dbReference type="Proteomes" id="UP000008710">
    <property type="component" value="Chromosome"/>
</dbReference>
<dbReference type="GO" id="GO:0003905">
    <property type="term" value="F:alkylbase DNA N-glycosylase activity"/>
    <property type="evidence" value="ECO:0007669"/>
    <property type="project" value="InterPro"/>
</dbReference>
<dbReference type="GO" id="GO:0003677">
    <property type="term" value="F:DNA binding"/>
    <property type="evidence" value="ECO:0007669"/>
    <property type="project" value="InterPro"/>
</dbReference>
<dbReference type="GO" id="GO:0006284">
    <property type="term" value="P:base-excision repair"/>
    <property type="evidence" value="ECO:0007669"/>
    <property type="project" value="InterPro"/>
</dbReference>
<dbReference type="CDD" id="cd00540">
    <property type="entry name" value="AAG"/>
    <property type="match status" value="1"/>
</dbReference>
<dbReference type="Gene3D" id="3.10.300.10">
    <property type="entry name" value="Methylpurine-DNA glycosylase (MPG)"/>
    <property type="match status" value="1"/>
</dbReference>
<dbReference type="HAMAP" id="MF_00527">
    <property type="entry name" value="3MGH"/>
    <property type="match status" value="1"/>
</dbReference>
<dbReference type="InterPro" id="IPR011034">
    <property type="entry name" value="Formyl_transferase-like_C_sf"/>
</dbReference>
<dbReference type="InterPro" id="IPR003180">
    <property type="entry name" value="MPG"/>
</dbReference>
<dbReference type="InterPro" id="IPR036995">
    <property type="entry name" value="MPG_sf"/>
</dbReference>
<dbReference type="NCBIfam" id="TIGR00567">
    <property type="entry name" value="3mg"/>
    <property type="match status" value="1"/>
</dbReference>
<dbReference type="NCBIfam" id="NF002003">
    <property type="entry name" value="PRK00802.1-3"/>
    <property type="match status" value="1"/>
</dbReference>
<dbReference type="PANTHER" id="PTHR10429">
    <property type="entry name" value="DNA-3-METHYLADENINE GLYCOSYLASE"/>
    <property type="match status" value="1"/>
</dbReference>
<dbReference type="PANTHER" id="PTHR10429:SF0">
    <property type="entry name" value="DNA-3-METHYLADENINE GLYCOSYLASE"/>
    <property type="match status" value="1"/>
</dbReference>
<dbReference type="Pfam" id="PF02245">
    <property type="entry name" value="Pur_DNA_glyco"/>
    <property type="match status" value="1"/>
</dbReference>
<dbReference type="SUPFAM" id="SSF50486">
    <property type="entry name" value="FMT C-terminal domain-like"/>
    <property type="match status" value="1"/>
</dbReference>
<organism>
    <name type="scientific">Rhodococcus jostii (strain RHA1)</name>
    <dbReference type="NCBI Taxonomy" id="101510"/>
    <lineage>
        <taxon>Bacteria</taxon>
        <taxon>Bacillati</taxon>
        <taxon>Actinomycetota</taxon>
        <taxon>Actinomycetes</taxon>
        <taxon>Mycobacteriales</taxon>
        <taxon>Nocardiaceae</taxon>
        <taxon>Rhodococcus</taxon>
    </lineage>
</organism>
<name>3MGH_RHOJR</name>
<reference key="1">
    <citation type="journal article" date="2006" name="Proc. Natl. Acad. Sci. U.S.A.">
        <title>The complete genome of Rhodococcus sp. RHA1 provides insights into a catabolic powerhouse.</title>
        <authorList>
            <person name="McLeod M.P."/>
            <person name="Warren R.L."/>
            <person name="Hsiao W.W.L."/>
            <person name="Araki N."/>
            <person name="Myhre M."/>
            <person name="Fernandes C."/>
            <person name="Miyazawa D."/>
            <person name="Wong W."/>
            <person name="Lillquist A.L."/>
            <person name="Wang D."/>
            <person name="Dosanjh M."/>
            <person name="Hara H."/>
            <person name="Petrescu A."/>
            <person name="Morin R.D."/>
            <person name="Yang G."/>
            <person name="Stott J.M."/>
            <person name="Schein J.E."/>
            <person name="Shin H."/>
            <person name="Smailus D."/>
            <person name="Siddiqui A.S."/>
            <person name="Marra M.A."/>
            <person name="Jones S.J.M."/>
            <person name="Holt R."/>
            <person name="Brinkman F.S.L."/>
            <person name="Miyauchi K."/>
            <person name="Fukuda M."/>
            <person name="Davies J.E."/>
            <person name="Mohn W.W."/>
            <person name="Eltis L.D."/>
        </authorList>
    </citation>
    <scope>NUCLEOTIDE SEQUENCE [LARGE SCALE GENOMIC DNA]</scope>
    <source>
        <strain>RHA1</strain>
    </source>
</reference>
<keyword id="KW-0227">DNA damage</keyword>
<keyword id="KW-0234">DNA repair</keyword>
<keyword id="KW-0378">Hydrolase</keyword>
<protein>
    <recommendedName>
        <fullName evidence="1">Putative 3-methyladenine DNA glycosylase</fullName>
        <ecNumber evidence="1">3.2.2.-</ecNumber>
    </recommendedName>
</protein>
<accession>Q0SI65</accession>
<sequence>MNYATAGVAASTVVENRDVTIERLHRAEPVDAARIVLGSTLVVGDVRIRIVEVEAYGGEKDGPWPDPASHSYRGRTPRNEVMFGPAGHLYVYRSYGMHFCMNVSYGPVGVAGGVLLRAGEVLDGCATVQARRPRVTRPAEWARGPGNLGSATGVTLAENGAALFESDSPVRLEVAESDGWVSGPRVGVSTAADRPWRFWIPESPAVSAYRRSPRAMSADEQMG</sequence>
<proteinExistence type="inferred from homology"/>
<gene>
    <name type="ordered locus">RHA1_ro00943</name>
</gene>
<evidence type="ECO:0000255" key="1">
    <source>
        <dbReference type="HAMAP-Rule" id="MF_00527"/>
    </source>
</evidence>
<feature type="chain" id="PRO_0000265049" description="Putative 3-methyladenine DNA glycosylase">
    <location>
        <begin position="1"/>
        <end position="223"/>
    </location>
</feature>